<gene>
    <name type="ordered locus">lpg1528</name>
</gene>
<sequence>MKRYVFMLSDGTGITAETLGNSLITQFENIQFEKITIPYIDSTHRAESVVLRINQCFSEQGTKPLVFMTLVDPEIRQAIKKAHACVFDLFSIFIGPLENELEEKSSYTVGRTHGVANVKSYSHRIEAIDFALSHDDGIKTRGYDKADIILIGVSRCGKTPSCLYMALQYGILAANYPFTEEDLVGFRLPEVLRPYKQKLFGLTIDAQRLQQIRSERRPNSKYASAEQCRLEVTEVEAMYQRENIPYINSTKYSIEEISTKVLAIAGLQRKI</sequence>
<protein>
    <recommendedName>
        <fullName evidence="1">Putative phosphoenolpyruvate synthase regulatory protein</fullName>
        <shortName evidence="1">PEP synthase regulatory protein</shortName>
        <shortName evidence="1">PSRP</shortName>
        <ecNumber evidence="1">2.7.11.33</ecNumber>
        <ecNumber evidence="1">2.7.4.28</ecNumber>
    </recommendedName>
    <alternativeName>
        <fullName evidence="1">Pyruvate, water dikinase regulatory protein</fullName>
    </alternativeName>
</protein>
<feature type="chain" id="PRO_0000196670" description="Putative phosphoenolpyruvate synthase regulatory protein">
    <location>
        <begin position="1"/>
        <end position="271"/>
    </location>
</feature>
<feature type="binding site" evidence="1">
    <location>
        <begin position="152"/>
        <end position="159"/>
    </location>
    <ligand>
        <name>ADP</name>
        <dbReference type="ChEBI" id="CHEBI:456216"/>
    </ligand>
</feature>
<comment type="function">
    <text evidence="1">Bifunctional serine/threonine kinase and phosphorylase involved in the regulation of the phosphoenolpyruvate synthase (PEPS) by catalyzing its phosphorylation/dephosphorylation.</text>
</comment>
<comment type="catalytic activity">
    <reaction evidence="1">
        <text>[pyruvate, water dikinase] + ADP = [pyruvate, water dikinase]-phosphate + AMP + H(+)</text>
        <dbReference type="Rhea" id="RHEA:46020"/>
        <dbReference type="Rhea" id="RHEA-COMP:11425"/>
        <dbReference type="Rhea" id="RHEA-COMP:11426"/>
        <dbReference type="ChEBI" id="CHEBI:15378"/>
        <dbReference type="ChEBI" id="CHEBI:43176"/>
        <dbReference type="ChEBI" id="CHEBI:68546"/>
        <dbReference type="ChEBI" id="CHEBI:456215"/>
        <dbReference type="ChEBI" id="CHEBI:456216"/>
        <dbReference type="EC" id="2.7.11.33"/>
    </reaction>
</comment>
<comment type="catalytic activity">
    <reaction evidence="1">
        <text>[pyruvate, water dikinase]-phosphate + phosphate + H(+) = [pyruvate, water dikinase] + diphosphate</text>
        <dbReference type="Rhea" id="RHEA:48580"/>
        <dbReference type="Rhea" id="RHEA-COMP:11425"/>
        <dbReference type="Rhea" id="RHEA-COMP:11426"/>
        <dbReference type="ChEBI" id="CHEBI:15378"/>
        <dbReference type="ChEBI" id="CHEBI:33019"/>
        <dbReference type="ChEBI" id="CHEBI:43176"/>
        <dbReference type="ChEBI" id="CHEBI:43474"/>
        <dbReference type="ChEBI" id="CHEBI:68546"/>
        <dbReference type="EC" id="2.7.4.28"/>
    </reaction>
</comment>
<comment type="similarity">
    <text evidence="1">Belongs to the pyruvate, phosphate/water dikinase regulatory protein family. PSRP subfamily.</text>
</comment>
<dbReference type="EC" id="2.7.11.33" evidence="1"/>
<dbReference type="EC" id="2.7.4.28" evidence="1"/>
<dbReference type="EMBL" id="AE017354">
    <property type="protein sequence ID" value="AAU27610.1"/>
    <property type="molecule type" value="Genomic_DNA"/>
</dbReference>
<dbReference type="RefSeq" id="WP_010947257.1">
    <property type="nucleotide sequence ID" value="NC_002942.5"/>
</dbReference>
<dbReference type="RefSeq" id="YP_095557.1">
    <property type="nucleotide sequence ID" value="NC_002942.5"/>
</dbReference>
<dbReference type="SMR" id="Q5ZVB2"/>
<dbReference type="STRING" id="272624.lpg1528"/>
<dbReference type="PaxDb" id="272624-lpg1528"/>
<dbReference type="KEGG" id="lpn:lpg1528"/>
<dbReference type="PATRIC" id="fig|272624.6.peg.1601"/>
<dbReference type="eggNOG" id="COG1806">
    <property type="taxonomic scope" value="Bacteria"/>
</dbReference>
<dbReference type="HOGENOM" id="CLU_046206_1_0_6"/>
<dbReference type="OrthoDB" id="9782201at2"/>
<dbReference type="Proteomes" id="UP000000609">
    <property type="component" value="Chromosome"/>
</dbReference>
<dbReference type="GO" id="GO:0043531">
    <property type="term" value="F:ADP binding"/>
    <property type="evidence" value="ECO:0007669"/>
    <property type="project" value="UniProtKB-UniRule"/>
</dbReference>
<dbReference type="GO" id="GO:0005524">
    <property type="term" value="F:ATP binding"/>
    <property type="evidence" value="ECO:0007669"/>
    <property type="project" value="InterPro"/>
</dbReference>
<dbReference type="GO" id="GO:0016776">
    <property type="term" value="F:phosphotransferase activity, phosphate group as acceptor"/>
    <property type="evidence" value="ECO:0007669"/>
    <property type="project" value="UniProtKB-UniRule"/>
</dbReference>
<dbReference type="GO" id="GO:0004674">
    <property type="term" value="F:protein serine/threonine kinase activity"/>
    <property type="evidence" value="ECO:0007669"/>
    <property type="project" value="UniProtKB-UniRule"/>
</dbReference>
<dbReference type="HAMAP" id="MF_01062">
    <property type="entry name" value="PSRP"/>
    <property type="match status" value="1"/>
</dbReference>
<dbReference type="InterPro" id="IPR005177">
    <property type="entry name" value="Kinase-pyrophosphorylase"/>
</dbReference>
<dbReference type="InterPro" id="IPR026530">
    <property type="entry name" value="PSRP"/>
</dbReference>
<dbReference type="NCBIfam" id="NF003742">
    <property type="entry name" value="PRK05339.1"/>
    <property type="match status" value="1"/>
</dbReference>
<dbReference type="PANTHER" id="PTHR31756">
    <property type="entry name" value="PYRUVATE, PHOSPHATE DIKINASE REGULATORY PROTEIN 1, CHLOROPLASTIC"/>
    <property type="match status" value="1"/>
</dbReference>
<dbReference type="PANTHER" id="PTHR31756:SF3">
    <property type="entry name" value="PYRUVATE, PHOSPHATE DIKINASE REGULATORY PROTEIN 1, CHLOROPLASTIC"/>
    <property type="match status" value="1"/>
</dbReference>
<dbReference type="Pfam" id="PF03618">
    <property type="entry name" value="Kinase-PPPase"/>
    <property type="match status" value="1"/>
</dbReference>
<keyword id="KW-0418">Kinase</keyword>
<keyword id="KW-0547">Nucleotide-binding</keyword>
<keyword id="KW-1185">Reference proteome</keyword>
<keyword id="KW-0723">Serine/threonine-protein kinase</keyword>
<keyword id="KW-0808">Transferase</keyword>
<proteinExistence type="inferred from homology"/>
<evidence type="ECO:0000255" key="1">
    <source>
        <dbReference type="HAMAP-Rule" id="MF_01062"/>
    </source>
</evidence>
<reference key="1">
    <citation type="journal article" date="2004" name="Science">
        <title>The genomic sequence of the accidental pathogen Legionella pneumophila.</title>
        <authorList>
            <person name="Chien M."/>
            <person name="Morozova I."/>
            <person name="Shi S."/>
            <person name="Sheng H."/>
            <person name="Chen J."/>
            <person name="Gomez S.M."/>
            <person name="Asamani G."/>
            <person name="Hill K."/>
            <person name="Nuara J."/>
            <person name="Feder M."/>
            <person name="Rineer J."/>
            <person name="Greenberg J.J."/>
            <person name="Steshenko V."/>
            <person name="Park S.H."/>
            <person name="Zhao B."/>
            <person name="Teplitskaya E."/>
            <person name="Edwards J.R."/>
            <person name="Pampou S."/>
            <person name="Georghiou A."/>
            <person name="Chou I.-C."/>
            <person name="Iannuccilli W."/>
            <person name="Ulz M.E."/>
            <person name="Kim D.H."/>
            <person name="Geringer-Sameth A."/>
            <person name="Goldsberry C."/>
            <person name="Morozov P."/>
            <person name="Fischer S.G."/>
            <person name="Segal G."/>
            <person name="Qu X."/>
            <person name="Rzhetsky A."/>
            <person name="Zhang P."/>
            <person name="Cayanis E."/>
            <person name="De Jong P.J."/>
            <person name="Ju J."/>
            <person name="Kalachikov S."/>
            <person name="Shuman H.A."/>
            <person name="Russo J.J."/>
        </authorList>
    </citation>
    <scope>NUCLEOTIDE SEQUENCE [LARGE SCALE GENOMIC DNA]</scope>
    <source>
        <strain>Philadelphia 1 / ATCC 33152 / DSM 7513</strain>
    </source>
</reference>
<accession>Q5ZVB2</accession>
<organism>
    <name type="scientific">Legionella pneumophila subsp. pneumophila (strain Philadelphia 1 / ATCC 33152 / DSM 7513)</name>
    <dbReference type="NCBI Taxonomy" id="272624"/>
    <lineage>
        <taxon>Bacteria</taxon>
        <taxon>Pseudomonadati</taxon>
        <taxon>Pseudomonadota</taxon>
        <taxon>Gammaproteobacteria</taxon>
        <taxon>Legionellales</taxon>
        <taxon>Legionellaceae</taxon>
        <taxon>Legionella</taxon>
    </lineage>
</organism>
<name>PSRP_LEGPH</name>